<sequence>MNKRRNLLNISDLTVDDVENITKLANQYLKKEVANSHILENKTVINLFFEDSTRTLASFEIAAKSLGANVVTLPIRSSSINKGEDLKDMIKTLNAMNPDYIIIRHKSSGIINTLAKYVNCSLINAGDGSSEHPTQALADYLVISNHKKQIKDLKVVICGDILHSRVARSNIRLLKMFGAEINLVAPPTLICKHFPEVDSVHYSLIEGIKDADVIMLLRLQKERMNNSSSEKEYFYLYGLDSQKLSYAKPDAIVMHPGPINRGIEISSDVADCVILQQVEFGLAIRKAVLHYYRPC</sequence>
<gene>
    <name evidence="1" type="primary">pyrB</name>
    <name type="ordered locus">WD_0895</name>
</gene>
<organism>
    <name type="scientific">Wolbachia pipientis wMel</name>
    <dbReference type="NCBI Taxonomy" id="163164"/>
    <lineage>
        <taxon>Bacteria</taxon>
        <taxon>Pseudomonadati</taxon>
        <taxon>Pseudomonadota</taxon>
        <taxon>Alphaproteobacteria</taxon>
        <taxon>Rickettsiales</taxon>
        <taxon>Anaplasmataceae</taxon>
        <taxon>Wolbachieae</taxon>
        <taxon>Wolbachia</taxon>
    </lineage>
</organism>
<proteinExistence type="inferred from homology"/>
<feature type="chain" id="PRO_0000113230" description="Aspartate carbamoyltransferase catalytic subunit">
    <location>
        <begin position="1"/>
        <end position="295"/>
    </location>
</feature>
<feature type="binding site" evidence="1">
    <location>
        <position position="54"/>
    </location>
    <ligand>
        <name>carbamoyl phosphate</name>
        <dbReference type="ChEBI" id="CHEBI:58228"/>
    </ligand>
</feature>
<feature type="binding site" evidence="1">
    <location>
        <position position="55"/>
    </location>
    <ligand>
        <name>carbamoyl phosphate</name>
        <dbReference type="ChEBI" id="CHEBI:58228"/>
    </ligand>
</feature>
<feature type="binding site" evidence="1">
    <location>
        <position position="82"/>
    </location>
    <ligand>
        <name>L-aspartate</name>
        <dbReference type="ChEBI" id="CHEBI:29991"/>
    </ligand>
</feature>
<feature type="binding site" evidence="1">
    <location>
        <position position="104"/>
    </location>
    <ligand>
        <name>carbamoyl phosphate</name>
        <dbReference type="ChEBI" id="CHEBI:58228"/>
    </ligand>
</feature>
<feature type="binding site" evidence="1">
    <location>
        <position position="132"/>
    </location>
    <ligand>
        <name>carbamoyl phosphate</name>
        <dbReference type="ChEBI" id="CHEBI:58228"/>
    </ligand>
</feature>
<feature type="binding site" evidence="1">
    <location>
        <position position="135"/>
    </location>
    <ligand>
        <name>carbamoyl phosphate</name>
        <dbReference type="ChEBI" id="CHEBI:58228"/>
    </ligand>
</feature>
<feature type="binding site" evidence="1">
    <location>
        <position position="165"/>
    </location>
    <ligand>
        <name>L-aspartate</name>
        <dbReference type="ChEBI" id="CHEBI:29991"/>
    </ligand>
</feature>
<feature type="binding site" evidence="1">
    <location>
        <position position="218"/>
    </location>
    <ligand>
        <name>L-aspartate</name>
        <dbReference type="ChEBI" id="CHEBI:29991"/>
    </ligand>
</feature>
<feature type="binding site" evidence="1">
    <location>
        <position position="257"/>
    </location>
    <ligand>
        <name>carbamoyl phosphate</name>
        <dbReference type="ChEBI" id="CHEBI:58228"/>
    </ligand>
</feature>
<feature type="binding site" evidence="1">
    <location>
        <position position="258"/>
    </location>
    <ligand>
        <name>carbamoyl phosphate</name>
        <dbReference type="ChEBI" id="CHEBI:58228"/>
    </ligand>
</feature>
<protein>
    <recommendedName>
        <fullName evidence="1">Aspartate carbamoyltransferase catalytic subunit</fullName>
        <ecNumber evidence="1">2.1.3.2</ecNumber>
    </recommendedName>
    <alternativeName>
        <fullName evidence="1">Aspartate transcarbamylase</fullName>
        <shortName evidence="1">ATCase</shortName>
    </alternativeName>
</protein>
<name>PYRB_WOLPM</name>
<reference key="1">
    <citation type="journal article" date="2004" name="PLoS Biol.">
        <title>Phylogenomics of the reproductive parasite Wolbachia pipientis wMel: a streamlined genome overrun by mobile genetic elements.</title>
        <authorList>
            <person name="Wu M."/>
            <person name="Sun L.V."/>
            <person name="Vamathevan J.J."/>
            <person name="Riegler M."/>
            <person name="DeBoy R.T."/>
            <person name="Brownlie J.C."/>
            <person name="McGraw E.A."/>
            <person name="Martin W."/>
            <person name="Esser C."/>
            <person name="Ahmadinejad N."/>
            <person name="Wiegand C."/>
            <person name="Madupu R."/>
            <person name="Beanan M.J."/>
            <person name="Brinkac L.M."/>
            <person name="Daugherty S.C."/>
            <person name="Durkin A.S."/>
            <person name="Kolonay J.F."/>
            <person name="Nelson W.C."/>
            <person name="Mohamoud Y."/>
            <person name="Lee P."/>
            <person name="Berry K.J."/>
            <person name="Young M.B."/>
            <person name="Utterback T.R."/>
            <person name="Weidman J.F."/>
            <person name="Nierman W.C."/>
            <person name="Paulsen I.T."/>
            <person name="Nelson K.E."/>
            <person name="Tettelin H."/>
            <person name="O'Neill S.L."/>
            <person name="Eisen J.A."/>
        </authorList>
    </citation>
    <scope>NUCLEOTIDE SEQUENCE [LARGE SCALE GENOMIC DNA]</scope>
</reference>
<dbReference type="EC" id="2.1.3.2" evidence="1"/>
<dbReference type="EMBL" id="AE017196">
    <property type="protein sequence ID" value="AAS14575.1"/>
    <property type="molecule type" value="Genomic_DNA"/>
</dbReference>
<dbReference type="RefSeq" id="WP_006280416.1">
    <property type="nucleotide sequence ID" value="NZ_OX384529.1"/>
</dbReference>
<dbReference type="SMR" id="Q73GP1"/>
<dbReference type="EnsemblBacteria" id="AAS14575">
    <property type="protein sequence ID" value="AAS14575"/>
    <property type="gene ID" value="WD_0895"/>
</dbReference>
<dbReference type="KEGG" id="wol:WD_0895"/>
<dbReference type="eggNOG" id="COG0540">
    <property type="taxonomic scope" value="Bacteria"/>
</dbReference>
<dbReference type="UniPathway" id="UPA00070">
    <property type="reaction ID" value="UER00116"/>
</dbReference>
<dbReference type="Proteomes" id="UP000008215">
    <property type="component" value="Chromosome"/>
</dbReference>
<dbReference type="GO" id="GO:0005829">
    <property type="term" value="C:cytosol"/>
    <property type="evidence" value="ECO:0007669"/>
    <property type="project" value="TreeGrafter"/>
</dbReference>
<dbReference type="GO" id="GO:0016597">
    <property type="term" value="F:amino acid binding"/>
    <property type="evidence" value="ECO:0007669"/>
    <property type="project" value="InterPro"/>
</dbReference>
<dbReference type="GO" id="GO:0004070">
    <property type="term" value="F:aspartate carbamoyltransferase activity"/>
    <property type="evidence" value="ECO:0007669"/>
    <property type="project" value="UniProtKB-UniRule"/>
</dbReference>
<dbReference type="GO" id="GO:0006207">
    <property type="term" value="P:'de novo' pyrimidine nucleobase biosynthetic process"/>
    <property type="evidence" value="ECO:0007669"/>
    <property type="project" value="InterPro"/>
</dbReference>
<dbReference type="GO" id="GO:0044205">
    <property type="term" value="P:'de novo' UMP biosynthetic process"/>
    <property type="evidence" value="ECO:0007669"/>
    <property type="project" value="UniProtKB-UniRule"/>
</dbReference>
<dbReference type="GO" id="GO:0006520">
    <property type="term" value="P:amino acid metabolic process"/>
    <property type="evidence" value="ECO:0007669"/>
    <property type="project" value="InterPro"/>
</dbReference>
<dbReference type="Gene3D" id="3.40.50.1370">
    <property type="entry name" value="Aspartate/ornithine carbamoyltransferase"/>
    <property type="match status" value="2"/>
</dbReference>
<dbReference type="HAMAP" id="MF_00001">
    <property type="entry name" value="Asp_carb_tr"/>
    <property type="match status" value="1"/>
</dbReference>
<dbReference type="InterPro" id="IPR006132">
    <property type="entry name" value="Asp/Orn_carbamoyltranf_P-bd"/>
</dbReference>
<dbReference type="InterPro" id="IPR006130">
    <property type="entry name" value="Asp/Orn_carbamoylTrfase"/>
</dbReference>
<dbReference type="InterPro" id="IPR036901">
    <property type="entry name" value="Asp/Orn_carbamoylTrfase_sf"/>
</dbReference>
<dbReference type="InterPro" id="IPR002082">
    <property type="entry name" value="Asp_carbamoyltransf"/>
</dbReference>
<dbReference type="InterPro" id="IPR006131">
    <property type="entry name" value="Asp_carbamoyltransf_Asp/Orn-bd"/>
</dbReference>
<dbReference type="NCBIfam" id="TIGR00670">
    <property type="entry name" value="asp_carb_tr"/>
    <property type="match status" value="1"/>
</dbReference>
<dbReference type="NCBIfam" id="NF002032">
    <property type="entry name" value="PRK00856.1"/>
    <property type="match status" value="1"/>
</dbReference>
<dbReference type="PANTHER" id="PTHR45753:SF6">
    <property type="entry name" value="ASPARTATE CARBAMOYLTRANSFERASE"/>
    <property type="match status" value="1"/>
</dbReference>
<dbReference type="PANTHER" id="PTHR45753">
    <property type="entry name" value="ORNITHINE CARBAMOYLTRANSFERASE, MITOCHONDRIAL"/>
    <property type="match status" value="1"/>
</dbReference>
<dbReference type="Pfam" id="PF00185">
    <property type="entry name" value="OTCace"/>
    <property type="match status" value="1"/>
</dbReference>
<dbReference type="Pfam" id="PF02729">
    <property type="entry name" value="OTCace_N"/>
    <property type="match status" value="1"/>
</dbReference>
<dbReference type="PRINTS" id="PR00100">
    <property type="entry name" value="AOTCASE"/>
</dbReference>
<dbReference type="PRINTS" id="PR00101">
    <property type="entry name" value="ATCASE"/>
</dbReference>
<dbReference type="SUPFAM" id="SSF53671">
    <property type="entry name" value="Aspartate/ornithine carbamoyltransferase"/>
    <property type="match status" value="1"/>
</dbReference>
<dbReference type="PROSITE" id="PS00097">
    <property type="entry name" value="CARBAMOYLTRANSFERASE"/>
    <property type="match status" value="1"/>
</dbReference>
<comment type="function">
    <text evidence="1">Catalyzes the condensation of carbamoyl phosphate and aspartate to form carbamoyl aspartate and inorganic phosphate, the committed step in the de novo pyrimidine nucleotide biosynthesis pathway.</text>
</comment>
<comment type="catalytic activity">
    <reaction evidence="1">
        <text>carbamoyl phosphate + L-aspartate = N-carbamoyl-L-aspartate + phosphate + H(+)</text>
        <dbReference type="Rhea" id="RHEA:20013"/>
        <dbReference type="ChEBI" id="CHEBI:15378"/>
        <dbReference type="ChEBI" id="CHEBI:29991"/>
        <dbReference type="ChEBI" id="CHEBI:32814"/>
        <dbReference type="ChEBI" id="CHEBI:43474"/>
        <dbReference type="ChEBI" id="CHEBI:58228"/>
        <dbReference type="EC" id="2.1.3.2"/>
    </reaction>
</comment>
<comment type="pathway">
    <text evidence="1">Pyrimidine metabolism; UMP biosynthesis via de novo pathway; (S)-dihydroorotate from bicarbonate: step 2/3.</text>
</comment>
<comment type="subunit">
    <text evidence="1">Heterododecamer (2C3:3R2) of six catalytic PyrB chains organized as two trimers (C3), and six regulatory PyrI chains organized as three dimers (R2).</text>
</comment>
<comment type="similarity">
    <text evidence="1">Belongs to the aspartate/ornithine carbamoyltransferase superfamily. ATCase family.</text>
</comment>
<accession>Q73GP1</accession>
<evidence type="ECO:0000255" key="1">
    <source>
        <dbReference type="HAMAP-Rule" id="MF_00001"/>
    </source>
</evidence>
<keyword id="KW-0665">Pyrimidine biosynthesis</keyword>
<keyword id="KW-0808">Transferase</keyword>